<proteinExistence type="inferred from homology"/>
<keyword id="KW-0067">ATP-binding</keyword>
<keyword id="KW-0238">DNA-binding</keyword>
<keyword id="KW-0255">Endonuclease</keyword>
<keyword id="KW-0378">Hydrolase</keyword>
<keyword id="KW-0540">Nuclease</keyword>
<keyword id="KW-0547">Nucleotide-binding</keyword>
<keyword id="KW-1185">Reference proteome</keyword>
<keyword id="KW-0694">RNA-binding</keyword>
<keyword id="KW-0699">rRNA-binding</keyword>
<comment type="function">
    <text evidence="1">Endonuclease that is involved in the suppression of homologous recombination and thus may have a key role in the control of bacterial genetic diversity.</text>
</comment>
<comment type="function">
    <text evidence="1">Acts as a ribosome collision sensor, splitting the ribosome into its 2 subunits. Detects stalled/collided 70S ribosomes which it binds and splits by an ATP-hydrolysis driven conformational change. Acts upstream of the ribosome quality control system (RQC), a ribosome-associated complex that mediates the extraction of incompletely synthesized nascent chains from stalled ribosomes and their subsequent degradation. Probably generates substrates for RQC.</text>
</comment>
<comment type="subunit">
    <text evidence="1">Homodimer. Binds to stalled ribosomes, contacting rRNA.</text>
</comment>
<comment type="similarity">
    <text evidence="1">Belongs to the DNA mismatch repair MutS family. MutS2 subfamily.</text>
</comment>
<feature type="chain" id="PRO_1000093373" description="Endonuclease MutS2">
    <location>
        <begin position="1"/>
        <end position="801"/>
    </location>
</feature>
<feature type="domain" description="Smr" evidence="1">
    <location>
        <begin position="726"/>
        <end position="801"/>
    </location>
</feature>
<feature type="region of interest" description="Disordered" evidence="2">
    <location>
        <begin position="696"/>
        <end position="721"/>
    </location>
</feature>
<feature type="compositionally biased region" description="Basic residues" evidence="2">
    <location>
        <begin position="701"/>
        <end position="710"/>
    </location>
</feature>
<feature type="binding site" evidence="1">
    <location>
        <begin position="336"/>
        <end position="343"/>
    </location>
    <ligand>
        <name>ATP</name>
        <dbReference type="ChEBI" id="CHEBI:30616"/>
    </ligand>
</feature>
<gene>
    <name evidence="1" type="primary">mutS2</name>
    <name evidence="1" type="synonym">rqcU</name>
    <name type="ordered locus">LCK_00333</name>
</gene>
<protein>
    <recommendedName>
        <fullName evidence="1">Endonuclease MutS2</fullName>
        <ecNumber evidence="1">3.1.-.-</ecNumber>
    </recommendedName>
    <alternativeName>
        <fullName evidence="1">Ribosome-associated protein quality control-upstream factor</fullName>
        <shortName evidence="1">RQC-upstream factor</shortName>
        <shortName evidence="1">RqcU</shortName>
        <ecNumber evidence="1">3.6.4.-</ecNumber>
    </alternativeName>
</protein>
<sequence>MNNKVLQTLEYDKIKLQLNDFLSTPTGLQEANELQPVSDVDLINHWLAETADAVLIDRLKGGIPLSKLSDITPHLKRLNIEASLSATELSEMSLVLRNTSTIASFFEQMQDEAIGESLRVLPEQAKNLVTLPDITRQIQIAIDSSGRLNDEASYELKHVRDRINGTEQAVKNQMQAYTRGKTAQYLSDPIVTIRSDRYVLPVKAEYRSQFGGVVHDQSQTGQTLYVEPQAVVTLNNKLSELRVQEQAEEQRVLQELSATLAPHTEEIANNVTILGHFDFVNAKARLAARLDAMQPMVNTENKVDLQQAWHPLLDKDLAVANDIALGDGYKAIIITGPNTGGKTITIKTLGILQLMAQSGLFITTKRPSTVGVFHEIFADIGDEQSIEQSLSTFSSHMANIVSMIDRIDDKTLVIFDELGAGTDPAEGAALAIAILDKVASLGAFVIATTHYPELKLYGYNRPETLNASMVFDVSTLKPTYQFLMGVPGQSNALAIAKRLGFGDDVIGAATALTSDADQDLNQMIADLVAQRDAVKQHDVALSEQLKATEKQSEALSEQQRQLEKERAKIVLDAKNEANHIVAATKKQAEQMISEIRKARLNAGQSAGELSEQDLQAKKRQLDGLRQNSSLEKNKILQKAKRAKQLAAGDEITVQSYGQQGTLIKQHSNGQWEVEMGILKMLVDEDDIVKTEATAKAQQSKAKQKQQKIVKTKTASGSARATAKSRLDLRGVRYEAALAELDRYLDTAVLANLGTVEIIHGKGTGALRQGVTEFLRSDRRVKAYHFANANAGGDGATIAELS</sequence>
<organism>
    <name type="scientific">Leuconostoc citreum (strain KM20)</name>
    <dbReference type="NCBI Taxonomy" id="349519"/>
    <lineage>
        <taxon>Bacteria</taxon>
        <taxon>Bacillati</taxon>
        <taxon>Bacillota</taxon>
        <taxon>Bacilli</taxon>
        <taxon>Lactobacillales</taxon>
        <taxon>Lactobacillaceae</taxon>
        <taxon>Leuconostoc</taxon>
    </lineage>
</organism>
<evidence type="ECO:0000255" key="1">
    <source>
        <dbReference type="HAMAP-Rule" id="MF_00092"/>
    </source>
</evidence>
<evidence type="ECO:0000256" key="2">
    <source>
        <dbReference type="SAM" id="MobiDB-lite"/>
    </source>
</evidence>
<accession>B1MXB4</accession>
<reference key="1">
    <citation type="journal article" date="2008" name="J. Bacteriol.">
        <title>Complete genome sequence of Leuconostoc citreum KM20.</title>
        <authorList>
            <person name="Kim J.F."/>
            <person name="Jeong H."/>
            <person name="Lee J.-S."/>
            <person name="Choi S.-H."/>
            <person name="Ha M."/>
            <person name="Hur C.-G."/>
            <person name="Kim J.-S."/>
            <person name="Lee S."/>
            <person name="Park H.-S."/>
            <person name="Park Y.-H."/>
            <person name="Oh T.K."/>
        </authorList>
    </citation>
    <scope>NUCLEOTIDE SEQUENCE [LARGE SCALE GENOMIC DNA]</scope>
    <source>
        <strain>KM20</strain>
    </source>
</reference>
<dbReference type="EC" id="3.1.-.-" evidence="1"/>
<dbReference type="EC" id="3.6.4.-" evidence="1"/>
<dbReference type="EMBL" id="DQ489736">
    <property type="protein sequence ID" value="ACA82166.1"/>
    <property type="molecule type" value="Genomic_DNA"/>
</dbReference>
<dbReference type="RefSeq" id="WP_004907415.1">
    <property type="nucleotide sequence ID" value="NC_010471.1"/>
</dbReference>
<dbReference type="SMR" id="B1MXB4"/>
<dbReference type="STRING" id="349519.LCK_00333"/>
<dbReference type="KEGG" id="lci:LCK_00333"/>
<dbReference type="eggNOG" id="COG1193">
    <property type="taxonomic scope" value="Bacteria"/>
</dbReference>
<dbReference type="HOGENOM" id="CLU_011252_2_1_9"/>
<dbReference type="OrthoDB" id="9808166at2"/>
<dbReference type="Proteomes" id="UP000002166">
    <property type="component" value="Chromosome"/>
</dbReference>
<dbReference type="GO" id="GO:0005524">
    <property type="term" value="F:ATP binding"/>
    <property type="evidence" value="ECO:0007669"/>
    <property type="project" value="UniProtKB-UniRule"/>
</dbReference>
<dbReference type="GO" id="GO:0016887">
    <property type="term" value="F:ATP hydrolysis activity"/>
    <property type="evidence" value="ECO:0007669"/>
    <property type="project" value="InterPro"/>
</dbReference>
<dbReference type="GO" id="GO:0140664">
    <property type="term" value="F:ATP-dependent DNA damage sensor activity"/>
    <property type="evidence" value="ECO:0007669"/>
    <property type="project" value="InterPro"/>
</dbReference>
<dbReference type="GO" id="GO:0004519">
    <property type="term" value="F:endonuclease activity"/>
    <property type="evidence" value="ECO:0007669"/>
    <property type="project" value="UniProtKB-UniRule"/>
</dbReference>
<dbReference type="GO" id="GO:0030983">
    <property type="term" value="F:mismatched DNA binding"/>
    <property type="evidence" value="ECO:0007669"/>
    <property type="project" value="InterPro"/>
</dbReference>
<dbReference type="GO" id="GO:0043023">
    <property type="term" value="F:ribosomal large subunit binding"/>
    <property type="evidence" value="ECO:0007669"/>
    <property type="project" value="UniProtKB-UniRule"/>
</dbReference>
<dbReference type="GO" id="GO:0019843">
    <property type="term" value="F:rRNA binding"/>
    <property type="evidence" value="ECO:0007669"/>
    <property type="project" value="UniProtKB-UniRule"/>
</dbReference>
<dbReference type="GO" id="GO:0006298">
    <property type="term" value="P:mismatch repair"/>
    <property type="evidence" value="ECO:0007669"/>
    <property type="project" value="InterPro"/>
</dbReference>
<dbReference type="GO" id="GO:0045910">
    <property type="term" value="P:negative regulation of DNA recombination"/>
    <property type="evidence" value="ECO:0007669"/>
    <property type="project" value="InterPro"/>
</dbReference>
<dbReference type="GO" id="GO:0072344">
    <property type="term" value="P:rescue of stalled ribosome"/>
    <property type="evidence" value="ECO:0007669"/>
    <property type="project" value="UniProtKB-UniRule"/>
</dbReference>
<dbReference type="FunFam" id="3.40.50.300:FF:000830">
    <property type="entry name" value="Endonuclease MutS2"/>
    <property type="match status" value="1"/>
</dbReference>
<dbReference type="Gene3D" id="3.30.1370.110">
    <property type="match status" value="1"/>
</dbReference>
<dbReference type="Gene3D" id="3.40.50.300">
    <property type="entry name" value="P-loop containing nucleotide triphosphate hydrolases"/>
    <property type="match status" value="1"/>
</dbReference>
<dbReference type="HAMAP" id="MF_00092">
    <property type="entry name" value="MutS2"/>
    <property type="match status" value="1"/>
</dbReference>
<dbReference type="InterPro" id="IPR000432">
    <property type="entry name" value="DNA_mismatch_repair_MutS_C"/>
</dbReference>
<dbReference type="InterPro" id="IPR007696">
    <property type="entry name" value="DNA_mismatch_repair_MutS_core"/>
</dbReference>
<dbReference type="InterPro" id="IPR036187">
    <property type="entry name" value="DNA_mismatch_repair_MutS_sf"/>
</dbReference>
<dbReference type="InterPro" id="IPR046893">
    <property type="entry name" value="MSSS"/>
</dbReference>
<dbReference type="InterPro" id="IPR045076">
    <property type="entry name" value="MutS"/>
</dbReference>
<dbReference type="InterPro" id="IPR005747">
    <property type="entry name" value="MutS2"/>
</dbReference>
<dbReference type="InterPro" id="IPR027417">
    <property type="entry name" value="P-loop_NTPase"/>
</dbReference>
<dbReference type="InterPro" id="IPR002625">
    <property type="entry name" value="Smr_dom"/>
</dbReference>
<dbReference type="InterPro" id="IPR036063">
    <property type="entry name" value="Smr_dom_sf"/>
</dbReference>
<dbReference type="NCBIfam" id="TIGR01069">
    <property type="entry name" value="mutS2"/>
    <property type="match status" value="1"/>
</dbReference>
<dbReference type="PANTHER" id="PTHR48466:SF2">
    <property type="entry name" value="OS10G0509000 PROTEIN"/>
    <property type="match status" value="1"/>
</dbReference>
<dbReference type="PANTHER" id="PTHR48466">
    <property type="entry name" value="OS10G0509000 PROTEIN-RELATED"/>
    <property type="match status" value="1"/>
</dbReference>
<dbReference type="Pfam" id="PF20297">
    <property type="entry name" value="MSSS"/>
    <property type="match status" value="1"/>
</dbReference>
<dbReference type="Pfam" id="PF00488">
    <property type="entry name" value="MutS_V"/>
    <property type="match status" value="1"/>
</dbReference>
<dbReference type="Pfam" id="PF01713">
    <property type="entry name" value="Smr"/>
    <property type="match status" value="1"/>
</dbReference>
<dbReference type="PIRSF" id="PIRSF005814">
    <property type="entry name" value="MutS_YshD"/>
    <property type="match status" value="1"/>
</dbReference>
<dbReference type="SMART" id="SM00534">
    <property type="entry name" value="MUTSac"/>
    <property type="match status" value="1"/>
</dbReference>
<dbReference type="SMART" id="SM00533">
    <property type="entry name" value="MUTSd"/>
    <property type="match status" value="1"/>
</dbReference>
<dbReference type="SMART" id="SM00463">
    <property type="entry name" value="SMR"/>
    <property type="match status" value="1"/>
</dbReference>
<dbReference type="SUPFAM" id="SSF48334">
    <property type="entry name" value="DNA repair protein MutS, domain III"/>
    <property type="match status" value="1"/>
</dbReference>
<dbReference type="SUPFAM" id="SSF52540">
    <property type="entry name" value="P-loop containing nucleoside triphosphate hydrolases"/>
    <property type="match status" value="1"/>
</dbReference>
<dbReference type="SUPFAM" id="SSF160443">
    <property type="entry name" value="SMR domain-like"/>
    <property type="match status" value="1"/>
</dbReference>
<dbReference type="PROSITE" id="PS00486">
    <property type="entry name" value="DNA_MISMATCH_REPAIR_2"/>
    <property type="match status" value="1"/>
</dbReference>
<dbReference type="PROSITE" id="PS50828">
    <property type="entry name" value="SMR"/>
    <property type="match status" value="1"/>
</dbReference>
<name>MUTS2_LEUCK</name>